<comment type="function">
    <text evidence="1">Binds to 23S rRNA. Forms part of two intersubunit bridges in the 70S ribosome.</text>
</comment>
<comment type="subunit">
    <text evidence="1">Part of the 50S ribosomal subunit. Forms a cluster with proteins L3 and L19. In the 70S ribosome, L14 and L19 interact and together make contacts with the 16S rRNA in bridges B5 and B8.</text>
</comment>
<comment type="similarity">
    <text evidence="1">Belongs to the universal ribosomal protein uL14 family.</text>
</comment>
<feature type="chain" id="PRO_1000144230" description="Large ribosomal subunit protein uL14">
    <location>
        <begin position="1"/>
        <end position="122"/>
    </location>
</feature>
<keyword id="KW-0687">Ribonucleoprotein</keyword>
<keyword id="KW-0689">Ribosomal protein</keyword>
<keyword id="KW-0694">RNA-binding</keyword>
<keyword id="KW-0699">rRNA-binding</keyword>
<reference key="1">
    <citation type="journal article" date="2008" name="PLoS Genet.">
        <title>The genome of Borrelia recurrentis, the agent of deadly louse-borne relapsing fever, is a degraded subset of tick-borne Borrelia duttonii.</title>
        <authorList>
            <person name="Lescot M."/>
            <person name="Audic S."/>
            <person name="Robert C."/>
            <person name="Nguyen T.T."/>
            <person name="Blanc G."/>
            <person name="Cutler S.J."/>
            <person name="Wincker P."/>
            <person name="Couloux A."/>
            <person name="Claverie J.-M."/>
            <person name="Raoult D."/>
            <person name="Drancourt M."/>
        </authorList>
    </citation>
    <scope>NUCLEOTIDE SEQUENCE [LARGE SCALE GENOMIC DNA]</scope>
    <source>
        <strain>A1</strain>
    </source>
</reference>
<organism>
    <name type="scientific">Borrelia recurrentis (strain A1)</name>
    <dbReference type="NCBI Taxonomy" id="412418"/>
    <lineage>
        <taxon>Bacteria</taxon>
        <taxon>Pseudomonadati</taxon>
        <taxon>Spirochaetota</taxon>
        <taxon>Spirochaetia</taxon>
        <taxon>Spirochaetales</taxon>
        <taxon>Borreliaceae</taxon>
        <taxon>Borrelia</taxon>
    </lineage>
</organism>
<evidence type="ECO:0000255" key="1">
    <source>
        <dbReference type="HAMAP-Rule" id="MF_01367"/>
    </source>
</evidence>
<evidence type="ECO:0000305" key="2"/>
<accession>B5RPJ2</accession>
<name>RL14_BORRA</name>
<proteinExistence type="inferred from homology"/>
<sequence length="122" mass="13425">MVQMQTYLTVADNTGGKIAQCIKVLGGSKRRYAKVGDIIVIAVKQAIPNSPVKKGDVHKAVIIRTSKEIRRKNGTYVRFDDNACVILDANLNPRGKRVFGPVARELRDANFMKVVSLASEVI</sequence>
<gene>
    <name evidence="1" type="primary">rplN</name>
    <name type="ordered locus">BRE_494</name>
</gene>
<dbReference type="EMBL" id="CP000993">
    <property type="protein sequence ID" value="ACH94726.1"/>
    <property type="molecule type" value="Genomic_DNA"/>
</dbReference>
<dbReference type="RefSeq" id="WP_012538242.1">
    <property type="nucleotide sequence ID" value="NZ_CP169983.1"/>
</dbReference>
<dbReference type="SMR" id="B5RPJ2"/>
<dbReference type="KEGG" id="bre:BRE_494"/>
<dbReference type="HOGENOM" id="CLU_095071_2_1_12"/>
<dbReference type="Proteomes" id="UP000000612">
    <property type="component" value="Chromosome"/>
</dbReference>
<dbReference type="GO" id="GO:0022625">
    <property type="term" value="C:cytosolic large ribosomal subunit"/>
    <property type="evidence" value="ECO:0007669"/>
    <property type="project" value="TreeGrafter"/>
</dbReference>
<dbReference type="GO" id="GO:0070180">
    <property type="term" value="F:large ribosomal subunit rRNA binding"/>
    <property type="evidence" value="ECO:0007669"/>
    <property type="project" value="TreeGrafter"/>
</dbReference>
<dbReference type="GO" id="GO:0003735">
    <property type="term" value="F:structural constituent of ribosome"/>
    <property type="evidence" value="ECO:0007669"/>
    <property type="project" value="InterPro"/>
</dbReference>
<dbReference type="GO" id="GO:0006412">
    <property type="term" value="P:translation"/>
    <property type="evidence" value="ECO:0007669"/>
    <property type="project" value="UniProtKB-UniRule"/>
</dbReference>
<dbReference type="CDD" id="cd00337">
    <property type="entry name" value="Ribosomal_uL14"/>
    <property type="match status" value="1"/>
</dbReference>
<dbReference type="FunFam" id="2.40.150.20:FF:000001">
    <property type="entry name" value="50S ribosomal protein L14"/>
    <property type="match status" value="1"/>
</dbReference>
<dbReference type="Gene3D" id="2.40.150.20">
    <property type="entry name" value="Ribosomal protein L14"/>
    <property type="match status" value="1"/>
</dbReference>
<dbReference type="HAMAP" id="MF_01367">
    <property type="entry name" value="Ribosomal_uL14"/>
    <property type="match status" value="1"/>
</dbReference>
<dbReference type="InterPro" id="IPR000218">
    <property type="entry name" value="Ribosomal_uL14"/>
</dbReference>
<dbReference type="InterPro" id="IPR005745">
    <property type="entry name" value="Ribosomal_uL14_bac-type"/>
</dbReference>
<dbReference type="InterPro" id="IPR019972">
    <property type="entry name" value="Ribosomal_uL14_CS"/>
</dbReference>
<dbReference type="InterPro" id="IPR036853">
    <property type="entry name" value="Ribosomal_uL14_sf"/>
</dbReference>
<dbReference type="NCBIfam" id="TIGR01067">
    <property type="entry name" value="rplN_bact"/>
    <property type="match status" value="1"/>
</dbReference>
<dbReference type="PANTHER" id="PTHR11761">
    <property type="entry name" value="50S/60S RIBOSOMAL PROTEIN L14/L23"/>
    <property type="match status" value="1"/>
</dbReference>
<dbReference type="PANTHER" id="PTHR11761:SF3">
    <property type="entry name" value="LARGE RIBOSOMAL SUBUNIT PROTEIN UL14M"/>
    <property type="match status" value="1"/>
</dbReference>
<dbReference type="Pfam" id="PF00238">
    <property type="entry name" value="Ribosomal_L14"/>
    <property type="match status" value="1"/>
</dbReference>
<dbReference type="SMART" id="SM01374">
    <property type="entry name" value="Ribosomal_L14"/>
    <property type="match status" value="1"/>
</dbReference>
<dbReference type="SUPFAM" id="SSF50193">
    <property type="entry name" value="Ribosomal protein L14"/>
    <property type="match status" value="1"/>
</dbReference>
<dbReference type="PROSITE" id="PS00049">
    <property type="entry name" value="RIBOSOMAL_L14"/>
    <property type="match status" value="1"/>
</dbReference>
<protein>
    <recommendedName>
        <fullName evidence="1">Large ribosomal subunit protein uL14</fullName>
    </recommendedName>
    <alternativeName>
        <fullName evidence="2">50S ribosomal protein L14</fullName>
    </alternativeName>
</protein>